<dbReference type="EC" id="1.4.4.2" evidence="1"/>
<dbReference type="EMBL" id="CP001400">
    <property type="protein sequence ID" value="ACP38059.1"/>
    <property type="molecule type" value="Genomic_DNA"/>
</dbReference>
<dbReference type="RefSeq" id="WP_012711310.1">
    <property type="nucleotide sequence ID" value="NC_012588.1"/>
</dbReference>
<dbReference type="SMR" id="C3MUU9"/>
<dbReference type="GeneID" id="84061617"/>
<dbReference type="KEGG" id="sia:M1425_1304"/>
<dbReference type="HOGENOM" id="CLU_004620_5_0_2"/>
<dbReference type="Proteomes" id="UP000001350">
    <property type="component" value="Chromosome"/>
</dbReference>
<dbReference type="GO" id="GO:0005829">
    <property type="term" value="C:cytosol"/>
    <property type="evidence" value="ECO:0007669"/>
    <property type="project" value="TreeGrafter"/>
</dbReference>
<dbReference type="GO" id="GO:0005960">
    <property type="term" value="C:glycine cleavage complex"/>
    <property type="evidence" value="ECO:0007669"/>
    <property type="project" value="TreeGrafter"/>
</dbReference>
<dbReference type="GO" id="GO:0016594">
    <property type="term" value="F:glycine binding"/>
    <property type="evidence" value="ECO:0007669"/>
    <property type="project" value="TreeGrafter"/>
</dbReference>
<dbReference type="GO" id="GO:0004375">
    <property type="term" value="F:glycine dehydrogenase (decarboxylating) activity"/>
    <property type="evidence" value="ECO:0007669"/>
    <property type="project" value="UniProtKB-EC"/>
</dbReference>
<dbReference type="GO" id="GO:0030170">
    <property type="term" value="F:pyridoxal phosphate binding"/>
    <property type="evidence" value="ECO:0007669"/>
    <property type="project" value="TreeGrafter"/>
</dbReference>
<dbReference type="GO" id="GO:0019464">
    <property type="term" value="P:glycine decarboxylation via glycine cleavage system"/>
    <property type="evidence" value="ECO:0007669"/>
    <property type="project" value="UniProtKB-UniRule"/>
</dbReference>
<dbReference type="CDD" id="cd00613">
    <property type="entry name" value="GDC-P"/>
    <property type="match status" value="1"/>
</dbReference>
<dbReference type="FunFam" id="3.40.640.10:FF:000224">
    <property type="entry name" value="Probable glycine dehydrogenase (decarboxylating) subunit 2"/>
    <property type="match status" value="1"/>
</dbReference>
<dbReference type="FunFam" id="3.90.1150.10:FF:000014">
    <property type="entry name" value="Probable glycine dehydrogenase (decarboxylating) subunit 2"/>
    <property type="match status" value="1"/>
</dbReference>
<dbReference type="Gene3D" id="6.20.440.10">
    <property type="match status" value="1"/>
</dbReference>
<dbReference type="Gene3D" id="3.90.1150.10">
    <property type="entry name" value="Aspartate Aminotransferase, domain 1"/>
    <property type="match status" value="1"/>
</dbReference>
<dbReference type="Gene3D" id="3.40.640.10">
    <property type="entry name" value="Type I PLP-dependent aspartate aminotransferase-like (Major domain)"/>
    <property type="match status" value="1"/>
</dbReference>
<dbReference type="HAMAP" id="MF_00713">
    <property type="entry name" value="GcvPB"/>
    <property type="match status" value="1"/>
</dbReference>
<dbReference type="InterPro" id="IPR023012">
    <property type="entry name" value="GcvPB"/>
</dbReference>
<dbReference type="InterPro" id="IPR049316">
    <property type="entry name" value="GDC-P_C"/>
</dbReference>
<dbReference type="InterPro" id="IPR049315">
    <property type="entry name" value="GDC-P_N"/>
</dbReference>
<dbReference type="InterPro" id="IPR020581">
    <property type="entry name" value="GDC_P"/>
</dbReference>
<dbReference type="InterPro" id="IPR015424">
    <property type="entry name" value="PyrdxlP-dep_Trfase"/>
</dbReference>
<dbReference type="InterPro" id="IPR015421">
    <property type="entry name" value="PyrdxlP-dep_Trfase_major"/>
</dbReference>
<dbReference type="InterPro" id="IPR015422">
    <property type="entry name" value="PyrdxlP-dep_Trfase_small"/>
</dbReference>
<dbReference type="NCBIfam" id="NF003346">
    <property type="entry name" value="PRK04366.1"/>
    <property type="match status" value="1"/>
</dbReference>
<dbReference type="PANTHER" id="PTHR11773:SF1">
    <property type="entry name" value="GLYCINE DEHYDROGENASE (DECARBOXYLATING), MITOCHONDRIAL"/>
    <property type="match status" value="1"/>
</dbReference>
<dbReference type="PANTHER" id="PTHR11773">
    <property type="entry name" value="GLYCINE DEHYDROGENASE, DECARBOXYLATING"/>
    <property type="match status" value="1"/>
</dbReference>
<dbReference type="Pfam" id="PF21478">
    <property type="entry name" value="GcvP2_C"/>
    <property type="match status" value="1"/>
</dbReference>
<dbReference type="Pfam" id="PF02347">
    <property type="entry name" value="GDC-P"/>
    <property type="match status" value="1"/>
</dbReference>
<dbReference type="SUPFAM" id="SSF53383">
    <property type="entry name" value="PLP-dependent transferases"/>
    <property type="match status" value="1"/>
</dbReference>
<gene>
    <name evidence="1" type="primary">gcvPB</name>
    <name type="ordered locus">M1425_1304</name>
</gene>
<feature type="chain" id="PRO_1000212676" description="Probable glycine dehydrogenase (decarboxylating) subunit 2">
    <location>
        <begin position="1"/>
        <end position="509"/>
    </location>
</feature>
<feature type="modified residue" description="N6-(pyridoxal phosphate)lysine" evidence="1">
    <location>
        <position position="278"/>
    </location>
</feature>
<name>GCSPB_SACI4</name>
<protein>
    <recommendedName>
        <fullName evidence="1">Probable glycine dehydrogenase (decarboxylating) subunit 2</fullName>
        <ecNumber evidence="1">1.4.4.2</ecNumber>
    </recommendedName>
    <alternativeName>
        <fullName evidence="1">Glycine cleavage system P-protein subunit 2</fullName>
    </alternativeName>
    <alternativeName>
        <fullName evidence="1">Glycine decarboxylase subunit 2</fullName>
    </alternativeName>
    <alternativeName>
        <fullName evidence="1">Glycine dehydrogenase (aminomethyl-transferring) subunit 2</fullName>
    </alternativeName>
</protein>
<accession>C3MUU9</accession>
<evidence type="ECO:0000255" key="1">
    <source>
        <dbReference type="HAMAP-Rule" id="MF_00713"/>
    </source>
</evidence>
<comment type="function">
    <text evidence="1">The glycine cleavage system catalyzes the degradation of glycine. The P protein binds the alpha-amino group of glycine through its pyridoxal phosphate cofactor; CO(2) is released and the remaining methylamine moiety is then transferred to the lipoamide cofactor of the H protein.</text>
</comment>
<comment type="catalytic activity">
    <reaction evidence="1">
        <text>N(6)-[(R)-lipoyl]-L-lysyl-[glycine-cleavage complex H protein] + glycine + H(+) = N(6)-[(R)-S(8)-aminomethyldihydrolipoyl]-L-lysyl-[glycine-cleavage complex H protein] + CO2</text>
        <dbReference type="Rhea" id="RHEA:24304"/>
        <dbReference type="Rhea" id="RHEA-COMP:10494"/>
        <dbReference type="Rhea" id="RHEA-COMP:10495"/>
        <dbReference type="ChEBI" id="CHEBI:15378"/>
        <dbReference type="ChEBI" id="CHEBI:16526"/>
        <dbReference type="ChEBI" id="CHEBI:57305"/>
        <dbReference type="ChEBI" id="CHEBI:83099"/>
        <dbReference type="ChEBI" id="CHEBI:83143"/>
        <dbReference type="EC" id="1.4.4.2"/>
    </reaction>
</comment>
<comment type="cofactor">
    <cofactor evidence="1">
        <name>pyridoxal 5'-phosphate</name>
        <dbReference type="ChEBI" id="CHEBI:597326"/>
    </cofactor>
</comment>
<comment type="subunit">
    <text evidence="1">The glycine cleavage system is composed of four proteins: P, T, L and H. In this organism, the P 'protein' is a heterodimer of two subunits.</text>
</comment>
<comment type="similarity">
    <text evidence="1">Belongs to the GcvP family. C-terminal subunit subfamily.</text>
</comment>
<sequence length="509" mass="56584">MVWRQAKWDEPLIFELNNSGANRQGLLINKDDEIRSEIKEMKIPKNLLRENGPNLPSLSELEVVRHFIRLSQMNFGVDVGIMPLGSCTMKYNPKIEEKATAITESHHPLEDEDHVQGILEMIYELQNWFSEITGMDECSLQVPAGSAGEFAGVLMIKKYHEDHNRNYKDTMLVADTAHGTNPASAAMAGYKVMYVKSNGEGLVDMDILREIVNDKTAGFMLTNPNTLGLFEENILEISKIIHSANAILYYDGANLNGVLGIARPGDMGFDIVHLNLHKTFAVPHGGGGPGAGAICAKGELVNYLPYPMVEKVNGKYRLSKIPKNSVGKIATFYGNVGNLARSFAYLLGLGPQGVQMVGKMSTLATNYLIAKLRDIKELELIAPNRHRKHEVVFSVKQLMENYGVSANDVAKALLDSGFYAPTIYFPPIIEEALMIEPTETESKETLDMFAEALKKIVEDAKRNPEQLLKSPSNTSIARLDQAYANHPSTITPTYRVLKLRRMGKINYLK</sequence>
<proteinExistence type="inferred from homology"/>
<organism>
    <name type="scientific">Saccharolobus islandicus (strain M.14.25 / Kamchatka #1)</name>
    <name type="common">Sulfolobus islandicus</name>
    <dbReference type="NCBI Taxonomy" id="427317"/>
    <lineage>
        <taxon>Archaea</taxon>
        <taxon>Thermoproteota</taxon>
        <taxon>Thermoprotei</taxon>
        <taxon>Sulfolobales</taxon>
        <taxon>Sulfolobaceae</taxon>
        <taxon>Saccharolobus</taxon>
    </lineage>
</organism>
<reference key="1">
    <citation type="journal article" date="2009" name="Proc. Natl. Acad. Sci. U.S.A.">
        <title>Biogeography of the Sulfolobus islandicus pan-genome.</title>
        <authorList>
            <person name="Reno M.L."/>
            <person name="Held N.L."/>
            <person name="Fields C.J."/>
            <person name="Burke P.V."/>
            <person name="Whitaker R.J."/>
        </authorList>
    </citation>
    <scope>NUCLEOTIDE SEQUENCE [LARGE SCALE GENOMIC DNA]</scope>
    <source>
        <strain>M.14.25 / Kamchatka #1</strain>
    </source>
</reference>
<keyword id="KW-0560">Oxidoreductase</keyword>
<keyword id="KW-0663">Pyridoxal phosphate</keyword>